<name>SIM2_HUMAN</name>
<dbReference type="EMBL" id="U80456">
    <property type="protein sequence ID" value="AAB62396.1"/>
    <property type="molecule type" value="mRNA"/>
</dbReference>
<dbReference type="EMBL" id="U80457">
    <property type="protein sequence ID" value="AAB62397.1"/>
    <property type="molecule type" value="mRNA"/>
</dbReference>
<dbReference type="EMBL" id="AB003185">
    <property type="protein sequence ID" value="BAA21489.1"/>
    <property type="molecule type" value="Genomic_DNA"/>
</dbReference>
<dbReference type="EMBL" id="AB003185">
    <property type="protein sequence ID" value="BAA21490.1"/>
    <property type="molecule type" value="Genomic_DNA"/>
</dbReference>
<dbReference type="EMBL" id="AP000697">
    <property type="protein sequence ID" value="BAA89433.1"/>
    <property type="molecule type" value="Genomic_DNA"/>
</dbReference>
<dbReference type="EMBL" id="AP001726">
    <property type="status" value="NOT_ANNOTATED_CDS"/>
    <property type="molecule type" value="Genomic_DNA"/>
</dbReference>
<dbReference type="EMBL" id="CH471079">
    <property type="protein sequence ID" value="EAX09737.1"/>
    <property type="molecule type" value="Genomic_DNA"/>
</dbReference>
<dbReference type="EMBL" id="BC110444">
    <property type="protein sequence ID" value="AAI10445.1"/>
    <property type="molecule type" value="mRNA"/>
</dbReference>
<dbReference type="EMBL" id="D85922">
    <property type="protein sequence ID" value="BAA12919.1"/>
    <property type="molecule type" value="Genomic_DNA"/>
</dbReference>
<dbReference type="EMBL" id="D44444">
    <property type="protein sequence ID" value="BAA07906.1"/>
    <property type="molecule type" value="Genomic_DNA"/>
</dbReference>
<dbReference type="EMBL" id="D44445">
    <property type="protein sequence ID" value="BAA07907.1"/>
    <property type="molecule type" value="Genomic_DNA"/>
</dbReference>
<dbReference type="EMBL" id="D44446">
    <property type="protein sequence ID" value="BAA07908.1"/>
    <property type="molecule type" value="Genomic_DNA"/>
</dbReference>
<dbReference type="EMBL" id="D44447">
    <property type="protein sequence ID" value="BAA07909.1"/>
    <property type="molecule type" value="Genomic_DNA"/>
</dbReference>
<dbReference type="EMBL" id="D44448">
    <property type="protein sequence ID" value="BAA07910.1"/>
    <property type="molecule type" value="Genomic_DNA"/>
</dbReference>
<dbReference type="EMBL" id="AJ001858">
    <property type="protein sequence ID" value="CAA05055.1"/>
    <property type="molecule type" value="mRNA"/>
</dbReference>
<dbReference type="EMBL" id="X84790">
    <property type="protein sequence ID" value="CAA59261.1"/>
    <property type="molecule type" value="mRNA"/>
</dbReference>
<dbReference type="EMBL" id="D70838">
    <property type="protein sequence ID" value="BAA11108.1"/>
    <property type="molecule type" value="Genomic_DNA"/>
</dbReference>
<dbReference type="CCDS" id="CCDS13646.1">
    <molecule id="Q14190-1"/>
</dbReference>
<dbReference type="PIR" id="A58520">
    <property type="entry name" value="A58520"/>
</dbReference>
<dbReference type="PIR" id="I78525">
    <property type="entry name" value="I78525"/>
</dbReference>
<dbReference type="PIR" id="I78526">
    <property type="entry name" value="I78526"/>
</dbReference>
<dbReference type="RefSeq" id="NP_005060.1">
    <molecule id="Q14190-1"/>
    <property type="nucleotide sequence ID" value="NM_005069.6"/>
</dbReference>
<dbReference type="RefSeq" id="NP_033664.2">
    <molecule id="Q14190-2"/>
    <property type="nucleotide sequence ID" value="NM_009586.5"/>
</dbReference>
<dbReference type="SMR" id="Q14190"/>
<dbReference type="BioGRID" id="112384">
    <property type="interactions" value="22"/>
</dbReference>
<dbReference type="FunCoup" id="Q14190">
    <property type="interactions" value="1178"/>
</dbReference>
<dbReference type="IntAct" id="Q14190">
    <property type="interactions" value="38"/>
</dbReference>
<dbReference type="MINT" id="Q14190"/>
<dbReference type="STRING" id="9606.ENSP00000290399"/>
<dbReference type="GlyGen" id="Q14190">
    <property type="glycosylation" value="2 sites, 1 O-linked glycan (1 site)"/>
</dbReference>
<dbReference type="iPTMnet" id="Q14190"/>
<dbReference type="PhosphoSitePlus" id="Q14190"/>
<dbReference type="BioMuta" id="SIM2"/>
<dbReference type="DMDM" id="2851630"/>
<dbReference type="jPOST" id="Q14190"/>
<dbReference type="MassIVE" id="Q14190"/>
<dbReference type="PaxDb" id="9606-ENSP00000290399"/>
<dbReference type="PeptideAtlas" id="Q14190"/>
<dbReference type="ProteomicsDB" id="59911">
    <molecule id="Q14190-1"/>
</dbReference>
<dbReference type="ProteomicsDB" id="59912">
    <molecule id="Q14190-2"/>
</dbReference>
<dbReference type="Antibodypedia" id="23108">
    <property type="antibodies" value="166 antibodies from 29 providers"/>
</dbReference>
<dbReference type="DNASU" id="6493"/>
<dbReference type="Ensembl" id="ENST00000290399.11">
    <molecule id="Q14190-1"/>
    <property type="protein sequence ID" value="ENSP00000290399.6"/>
    <property type="gene ID" value="ENSG00000159263.16"/>
</dbReference>
<dbReference type="GeneID" id="6493"/>
<dbReference type="KEGG" id="hsa:6493"/>
<dbReference type="MANE-Select" id="ENST00000290399.11">
    <property type="protein sequence ID" value="ENSP00000290399.6"/>
    <property type="RefSeq nucleotide sequence ID" value="NM_005069.6"/>
    <property type="RefSeq protein sequence ID" value="NP_005060.1"/>
</dbReference>
<dbReference type="UCSC" id="uc002yvr.3">
    <molecule id="Q14190-1"/>
    <property type="organism name" value="human"/>
</dbReference>
<dbReference type="AGR" id="HGNC:10883"/>
<dbReference type="CTD" id="6493"/>
<dbReference type="DisGeNET" id="6493"/>
<dbReference type="GeneCards" id="SIM2"/>
<dbReference type="HGNC" id="HGNC:10883">
    <property type="gene designation" value="SIM2"/>
</dbReference>
<dbReference type="HPA" id="ENSG00000159263">
    <property type="expression patterns" value="Group enriched (esophagus, kidney)"/>
</dbReference>
<dbReference type="MIM" id="600892">
    <property type="type" value="gene"/>
</dbReference>
<dbReference type="neXtProt" id="NX_Q14190"/>
<dbReference type="OpenTargets" id="ENSG00000159263"/>
<dbReference type="PharmGKB" id="PA35783"/>
<dbReference type="VEuPathDB" id="HostDB:ENSG00000159263"/>
<dbReference type="eggNOG" id="KOG3559">
    <property type="taxonomic scope" value="Eukaryota"/>
</dbReference>
<dbReference type="GeneTree" id="ENSGT00940000159985"/>
<dbReference type="HOGENOM" id="CLU_010044_4_1_1"/>
<dbReference type="InParanoid" id="Q14190"/>
<dbReference type="OMA" id="WGQPSRL"/>
<dbReference type="OrthoDB" id="6021714at2759"/>
<dbReference type="PAN-GO" id="Q14190">
    <property type="GO annotations" value="3 GO annotations based on evolutionary models"/>
</dbReference>
<dbReference type="PhylomeDB" id="Q14190"/>
<dbReference type="TreeFam" id="TF317772"/>
<dbReference type="PathwayCommons" id="Q14190"/>
<dbReference type="SignaLink" id="Q14190"/>
<dbReference type="SIGNOR" id="Q14190"/>
<dbReference type="BioGRID-ORCS" id="6493">
    <property type="hits" value="12 hits in 1149 CRISPR screens"/>
</dbReference>
<dbReference type="CD-CODE" id="F701F3BC">
    <property type="entry name" value="PcG body"/>
</dbReference>
<dbReference type="ChiTaRS" id="SIM2">
    <property type="organism name" value="human"/>
</dbReference>
<dbReference type="GeneWiki" id="SIM2"/>
<dbReference type="GenomeRNAi" id="6493"/>
<dbReference type="Pharos" id="Q14190">
    <property type="development level" value="Tbio"/>
</dbReference>
<dbReference type="PRO" id="PR:Q14190"/>
<dbReference type="Proteomes" id="UP000005640">
    <property type="component" value="Chromosome 21"/>
</dbReference>
<dbReference type="RNAct" id="Q14190">
    <property type="molecule type" value="protein"/>
</dbReference>
<dbReference type="Bgee" id="ENSG00000159263">
    <property type="expression patterns" value="Expressed in renal medulla and 100 other cell types or tissues"/>
</dbReference>
<dbReference type="ExpressionAtlas" id="Q14190">
    <property type="expression patterns" value="baseline and differential"/>
</dbReference>
<dbReference type="GO" id="GO:0000785">
    <property type="term" value="C:chromatin"/>
    <property type="evidence" value="ECO:0000247"/>
    <property type="project" value="NTNU_SB"/>
</dbReference>
<dbReference type="GO" id="GO:0016604">
    <property type="term" value="C:nuclear body"/>
    <property type="evidence" value="ECO:0000314"/>
    <property type="project" value="HPA"/>
</dbReference>
<dbReference type="GO" id="GO:0005654">
    <property type="term" value="C:nucleoplasm"/>
    <property type="evidence" value="ECO:0000314"/>
    <property type="project" value="HPA"/>
</dbReference>
<dbReference type="GO" id="GO:0003677">
    <property type="term" value="F:DNA binding"/>
    <property type="evidence" value="ECO:0000304"/>
    <property type="project" value="ProtInc"/>
</dbReference>
<dbReference type="GO" id="GO:0003700">
    <property type="term" value="F:DNA-binding transcription factor activity"/>
    <property type="evidence" value="ECO:0000304"/>
    <property type="project" value="ProtInc"/>
</dbReference>
<dbReference type="GO" id="GO:0000981">
    <property type="term" value="F:DNA-binding transcription factor activity, RNA polymerase II-specific"/>
    <property type="evidence" value="ECO:0000247"/>
    <property type="project" value="NTNU_SB"/>
</dbReference>
<dbReference type="GO" id="GO:0046982">
    <property type="term" value="F:protein heterodimerization activity"/>
    <property type="evidence" value="ECO:0007669"/>
    <property type="project" value="Ensembl"/>
</dbReference>
<dbReference type="GO" id="GO:0000977">
    <property type="term" value="F:RNA polymerase II transcription regulatory region sequence-specific DNA binding"/>
    <property type="evidence" value="ECO:0000318"/>
    <property type="project" value="GO_Central"/>
</dbReference>
<dbReference type="GO" id="GO:0030154">
    <property type="term" value="P:cell differentiation"/>
    <property type="evidence" value="ECO:0007669"/>
    <property type="project" value="UniProtKB-KW"/>
</dbReference>
<dbReference type="GO" id="GO:0009880">
    <property type="term" value="P:embryonic pattern specification"/>
    <property type="evidence" value="ECO:0007669"/>
    <property type="project" value="Ensembl"/>
</dbReference>
<dbReference type="GO" id="GO:0030324">
    <property type="term" value="P:lung development"/>
    <property type="evidence" value="ECO:0007669"/>
    <property type="project" value="Ensembl"/>
</dbReference>
<dbReference type="GO" id="GO:0000122">
    <property type="term" value="P:negative regulation of transcription by RNA polymerase II"/>
    <property type="evidence" value="ECO:0007669"/>
    <property type="project" value="Ensembl"/>
</dbReference>
<dbReference type="GO" id="GO:0007399">
    <property type="term" value="P:nervous system development"/>
    <property type="evidence" value="ECO:0000304"/>
    <property type="project" value="ProtInc"/>
</dbReference>
<dbReference type="GO" id="GO:0006357">
    <property type="term" value="P:regulation of transcription by RNA polymerase II"/>
    <property type="evidence" value="ECO:0000318"/>
    <property type="project" value="GO_Central"/>
</dbReference>
<dbReference type="CDD" id="cd00130">
    <property type="entry name" value="PAS"/>
    <property type="match status" value="2"/>
</dbReference>
<dbReference type="FunFam" id="3.30.450.20:FF:000017">
    <property type="entry name" value="SIM bHLH transcription factor 2"/>
    <property type="match status" value="1"/>
</dbReference>
<dbReference type="FunFam" id="3.30.450.20:FF:000047">
    <property type="entry name" value="SIM bHLH transcription factor 2"/>
    <property type="match status" value="1"/>
</dbReference>
<dbReference type="FunFam" id="4.10.280.10:FF:000007">
    <property type="entry name" value="single-minded homolog 1 isoform X1"/>
    <property type="match status" value="1"/>
</dbReference>
<dbReference type="Gene3D" id="4.10.280.10">
    <property type="entry name" value="Helix-loop-helix DNA-binding domain"/>
    <property type="match status" value="1"/>
</dbReference>
<dbReference type="Gene3D" id="3.30.450.20">
    <property type="entry name" value="PAS domain"/>
    <property type="match status" value="2"/>
</dbReference>
<dbReference type="InterPro" id="IPR011598">
    <property type="entry name" value="bHLH_dom"/>
</dbReference>
<dbReference type="InterPro" id="IPR036638">
    <property type="entry name" value="HLH_DNA-bd_sf"/>
</dbReference>
<dbReference type="InterPro" id="IPR001610">
    <property type="entry name" value="PAC"/>
</dbReference>
<dbReference type="InterPro" id="IPR000014">
    <property type="entry name" value="PAS"/>
</dbReference>
<dbReference type="InterPro" id="IPR035965">
    <property type="entry name" value="PAS-like_dom_sf"/>
</dbReference>
<dbReference type="InterPro" id="IPR013767">
    <property type="entry name" value="PAS_fold"/>
</dbReference>
<dbReference type="InterPro" id="IPR013655">
    <property type="entry name" value="PAS_fold_3"/>
</dbReference>
<dbReference type="InterPro" id="IPR010578">
    <property type="entry name" value="SIM_C"/>
</dbReference>
<dbReference type="PANTHER" id="PTHR23043">
    <property type="entry name" value="HYPOXIA-INDUCIBLE FACTOR 1 ALPHA"/>
    <property type="match status" value="1"/>
</dbReference>
<dbReference type="PANTHER" id="PTHR23043:SF19">
    <property type="entry name" value="SINGLE-MINDED HOMOLOG 2"/>
    <property type="match status" value="1"/>
</dbReference>
<dbReference type="Pfam" id="PF23171">
    <property type="entry name" value="bHLH_HIF1A"/>
    <property type="match status" value="1"/>
</dbReference>
<dbReference type="Pfam" id="PF00989">
    <property type="entry name" value="PAS"/>
    <property type="match status" value="1"/>
</dbReference>
<dbReference type="Pfam" id="PF08447">
    <property type="entry name" value="PAS_3"/>
    <property type="match status" value="1"/>
</dbReference>
<dbReference type="Pfam" id="PF06621">
    <property type="entry name" value="SIM_C"/>
    <property type="match status" value="1"/>
</dbReference>
<dbReference type="SMART" id="SM00353">
    <property type="entry name" value="HLH"/>
    <property type="match status" value="1"/>
</dbReference>
<dbReference type="SMART" id="SM00086">
    <property type="entry name" value="PAC"/>
    <property type="match status" value="1"/>
</dbReference>
<dbReference type="SMART" id="SM00091">
    <property type="entry name" value="PAS"/>
    <property type="match status" value="2"/>
</dbReference>
<dbReference type="SUPFAM" id="SSF47459">
    <property type="entry name" value="HLH, helix-loop-helix DNA-binding domain"/>
    <property type="match status" value="1"/>
</dbReference>
<dbReference type="SUPFAM" id="SSF55785">
    <property type="entry name" value="PYP-like sensor domain (PAS domain)"/>
    <property type="match status" value="2"/>
</dbReference>
<dbReference type="PROSITE" id="PS50888">
    <property type="entry name" value="BHLH"/>
    <property type="match status" value="1"/>
</dbReference>
<dbReference type="PROSITE" id="PS50112">
    <property type="entry name" value="PAS"/>
    <property type="match status" value="2"/>
</dbReference>
<dbReference type="PROSITE" id="PS51302">
    <property type="entry name" value="SIM_C"/>
    <property type="match status" value="1"/>
</dbReference>
<keyword id="KW-0025">Alternative splicing</keyword>
<keyword id="KW-0217">Developmental protein</keyword>
<keyword id="KW-0221">Differentiation</keyword>
<keyword id="KW-0238">DNA-binding</keyword>
<keyword id="KW-0524">Neurogenesis</keyword>
<keyword id="KW-0539">Nucleus</keyword>
<keyword id="KW-1267">Proteomics identification</keyword>
<keyword id="KW-1185">Reference proteome</keyword>
<keyword id="KW-0677">Repeat</keyword>
<keyword id="KW-0804">Transcription</keyword>
<keyword id="KW-0805">Transcription regulation</keyword>
<protein>
    <recommendedName>
        <fullName>Single-minded homolog 2</fullName>
    </recommendedName>
    <alternativeName>
        <fullName>Class E basic helix-loop-helix protein 15</fullName>
        <shortName>bHLHe15</shortName>
    </alternativeName>
</protein>
<reference key="1">
    <citation type="journal article" date="1997" name="Genome Res.">
        <title>Cloning of two human homologs of the Drosophila single-minded gene SIM1 on chromosome 6q and SIM2 on 21q within the Down syndrome chromosomal region.</title>
        <authorList>
            <person name="Chrast R."/>
            <person name="Scott H.S."/>
            <person name="Chen H."/>
            <person name="Kudoh J."/>
            <person name="Rossier C."/>
            <person name="Minoshima S."/>
            <person name="Wang Y."/>
            <person name="Shimizu N."/>
            <person name="Antonarakis S.E."/>
        </authorList>
    </citation>
    <scope>NUCLEOTIDE SEQUENCE [GENOMIC DNA / MRNA] (ISOFORMS SIM2 AND SIM2S)</scope>
</reference>
<reference key="2">
    <citation type="submission" date="1999-11" db="EMBL/GenBank/DDBJ databases">
        <title>Genomic sequencing of 1.2-Mb region on human chromosome 21q22.2.</title>
        <authorList>
            <person name="Shibuya K."/>
            <person name="Kudoh J."/>
            <person name="Minoshima S."/>
            <person name="Kawasaki K."/>
            <person name="Nakatoh E."/>
            <person name="Shintani A."/>
            <person name="Asakawa S."/>
            <person name="Shimizu N."/>
        </authorList>
    </citation>
    <scope>NUCLEOTIDE SEQUENCE [GENOMIC DNA]</scope>
</reference>
<reference key="3">
    <citation type="journal article" date="2000" name="Nature">
        <title>The DNA sequence of human chromosome 21.</title>
        <authorList>
            <person name="Hattori M."/>
            <person name="Fujiyama A."/>
            <person name="Taylor T.D."/>
            <person name="Watanabe H."/>
            <person name="Yada T."/>
            <person name="Park H.-S."/>
            <person name="Toyoda A."/>
            <person name="Ishii K."/>
            <person name="Totoki Y."/>
            <person name="Choi D.-K."/>
            <person name="Groner Y."/>
            <person name="Soeda E."/>
            <person name="Ohki M."/>
            <person name="Takagi T."/>
            <person name="Sakaki Y."/>
            <person name="Taudien S."/>
            <person name="Blechschmidt K."/>
            <person name="Polley A."/>
            <person name="Menzel U."/>
            <person name="Delabar J."/>
            <person name="Kumpf K."/>
            <person name="Lehmann R."/>
            <person name="Patterson D."/>
            <person name="Reichwald K."/>
            <person name="Rump A."/>
            <person name="Schillhabel M."/>
            <person name="Schudy A."/>
            <person name="Zimmermann W."/>
            <person name="Rosenthal A."/>
            <person name="Kudoh J."/>
            <person name="Shibuya K."/>
            <person name="Kawasaki K."/>
            <person name="Asakawa S."/>
            <person name="Shintani A."/>
            <person name="Sasaki T."/>
            <person name="Nagamine K."/>
            <person name="Mitsuyama S."/>
            <person name="Antonarakis S.E."/>
            <person name="Minoshima S."/>
            <person name="Shimizu N."/>
            <person name="Nordsiek G."/>
            <person name="Hornischer K."/>
            <person name="Brandt P."/>
            <person name="Scharfe M."/>
            <person name="Schoen O."/>
            <person name="Desario A."/>
            <person name="Reichelt J."/>
            <person name="Kauer G."/>
            <person name="Bloecker H."/>
            <person name="Ramser J."/>
            <person name="Beck A."/>
            <person name="Klages S."/>
            <person name="Hennig S."/>
            <person name="Riesselmann L."/>
            <person name="Dagand E."/>
            <person name="Wehrmeyer S."/>
            <person name="Borzym K."/>
            <person name="Gardiner K."/>
            <person name="Nizetic D."/>
            <person name="Francis F."/>
            <person name="Lehrach H."/>
            <person name="Reinhardt R."/>
            <person name="Yaspo M.-L."/>
        </authorList>
    </citation>
    <scope>NUCLEOTIDE SEQUENCE [LARGE SCALE GENOMIC DNA]</scope>
</reference>
<reference key="4">
    <citation type="submission" date="2005-09" db="EMBL/GenBank/DDBJ databases">
        <authorList>
            <person name="Mural R.J."/>
            <person name="Istrail S."/>
            <person name="Sutton G.G."/>
            <person name="Florea L."/>
            <person name="Halpern A.L."/>
            <person name="Mobarry C.M."/>
            <person name="Lippert R."/>
            <person name="Walenz B."/>
            <person name="Shatkay H."/>
            <person name="Dew I."/>
            <person name="Miller J.R."/>
            <person name="Flanigan M.J."/>
            <person name="Edwards N.J."/>
            <person name="Bolanos R."/>
            <person name="Fasulo D."/>
            <person name="Halldorsson B.V."/>
            <person name="Hannenhalli S."/>
            <person name="Turner R."/>
            <person name="Yooseph S."/>
            <person name="Lu F."/>
            <person name="Nusskern D.R."/>
            <person name="Shue B.C."/>
            <person name="Zheng X.H."/>
            <person name="Zhong F."/>
            <person name="Delcher A.L."/>
            <person name="Huson D.H."/>
            <person name="Kravitz S.A."/>
            <person name="Mouchard L."/>
            <person name="Reinert K."/>
            <person name="Remington K.A."/>
            <person name="Clark A.G."/>
            <person name="Waterman M.S."/>
            <person name="Eichler E.E."/>
            <person name="Adams M.D."/>
            <person name="Hunkapiller M.W."/>
            <person name="Myers E.W."/>
            <person name="Venter J.C."/>
        </authorList>
    </citation>
    <scope>NUCLEOTIDE SEQUENCE [LARGE SCALE GENOMIC DNA]</scope>
</reference>
<reference key="5">
    <citation type="journal article" date="2004" name="Genome Res.">
        <title>The status, quality, and expansion of the NIH full-length cDNA project: the Mammalian Gene Collection (MGC).</title>
        <authorList>
            <consortium name="The MGC Project Team"/>
        </authorList>
    </citation>
    <scope>NUCLEOTIDE SEQUENCE [LARGE SCALE MRNA] (ISOFORM SIM2S)</scope>
</reference>
<reference key="6">
    <citation type="journal article" date="1996" name="DNA Res.">
        <title>A 19-kb CpG island associated with single-minded gene 2 in Down syndrome chromosomal region.</title>
        <authorList>
            <person name="Osoegawa K."/>
            <person name="Okano S."/>
            <person name="Kato Y."/>
            <person name="Nishimura Y."/>
            <person name="Soeda E."/>
        </authorList>
    </citation>
    <scope>NUCLEOTIDE SEQUENCE [GENOMIC DNA] OF 1-247</scope>
</reference>
<reference key="7">
    <citation type="journal article" date="1995" name="Nat. Genet.">
        <title>Single-minded and Down syndrome?</title>
        <authorList>
            <person name="Chen H."/>
            <person name="Chrast R."/>
            <person name="Rossier C."/>
            <person name="Gos A."/>
            <person name="Antonarakis S.E."/>
            <person name="Kudoh J."/>
            <person name="Yamaki A."/>
            <person name="Shindoh N."/>
            <person name="Maeda H."/>
            <person name="Minoshima S."/>
            <person name="Shimizu N."/>
        </authorList>
    </citation>
    <scope>NUCLEOTIDE SEQUENCE [GENOMIC DNA] OF 1-58; 87-152; 183-247 AND 249-283</scope>
</reference>
<reference key="8">
    <citation type="journal article" date="1998" name="Genomics">
        <title>Transcriptional map of the 2.5-Mb CBR-ERG region of chromosome 21 involved in Down syndrome.</title>
        <authorList>
            <person name="Dahmane N."/>
            <person name="Ait-Ghezala G."/>
            <person name="Gosset P."/>
            <person name="Chamoun Z."/>
            <person name="Dufresne-Zacharia M.-C."/>
            <person name="Lopes C."/>
            <person name="Rabatel N."/>
            <person name="Gassanova-Maugenre S."/>
            <person name="Chettouh Z."/>
            <person name="Abramowski V."/>
            <person name="Fayet E."/>
            <person name="Yaspo M.-L."/>
            <person name="Korn B."/>
            <person name="Blouin J.-L."/>
            <person name="Lehrach H."/>
            <person name="Poustka A."/>
            <person name="Antonarakis S.E."/>
            <person name="Sinet P.-M."/>
            <person name="Creau N."/>
            <person name="Delabar J.-M."/>
        </authorList>
    </citation>
    <scope>NUCLEOTIDE SEQUENCE [MRNA] OF 64-526</scope>
    <scope>VARIANT MET-483</scope>
    <source>
        <tissue>Fetal brain</tissue>
        <tissue>Muscle</tissue>
    </source>
</reference>
<reference key="9">
    <citation type="journal article" date="1995" name="Proc. Natl. Acad. Sci. U.S.A.">
        <title>Down syndrome-critical region contains a gene homologous to Drosophila sim expressed during rat and human central nervous system development.</title>
        <authorList>
            <person name="Dahmane N."/>
            <person name="Charron G."/>
            <person name="Lopes C."/>
            <person name="Yaspo M.-L."/>
            <person name="Maunoury C."/>
            <person name="Decorte L."/>
            <person name="Sinet P.-M."/>
            <person name="Bloch B."/>
            <person name="Delabar J.-M."/>
        </authorList>
    </citation>
    <scope>NUCLEOTIDE SEQUENCE [MRNA] OF 87-116</scope>
</reference>
<reference key="10">
    <citation type="journal article" date="1996" name="Genomics">
        <title>The mammalian single-minded (SIM) gene: mouse cDNA structure and diencephalic expression indicate a candidate gene for Down syndrome.</title>
        <authorList>
            <person name="Yamaki A."/>
            <person name="Noda S."/>
            <person name="Kudoh J."/>
            <person name="Shindoh N."/>
            <person name="Maeda H."/>
            <person name="Minoshima S."/>
            <person name="Kawasaki K."/>
            <person name="Shimizu Y."/>
            <person name="Shimizu N."/>
        </authorList>
    </citation>
    <scope>NUCLEOTIDE SEQUENCE [GENOMIC DNA] OF 154-181</scope>
</reference>
<reference key="11">
    <citation type="journal article" date="2004" name="Biochem. Biophys. Res. Commun.">
        <title>A novel nuclear localization signal in the human single-minded proteins SIM1 and SIM2.</title>
        <authorList>
            <person name="Yamaki A."/>
            <person name="Kudoh J."/>
            <person name="Shimizu N."/>
            <person name="Shimizu Y."/>
        </authorList>
    </citation>
    <scope>SUBCELLULAR LOCATION</scope>
    <scope>NUCLEAR LOCALIZATION SIGNAL</scope>
    <scope>MUTAGENESIS OF NUCLEAR LOCALIZATION SIGNAL</scope>
</reference>
<reference key="12">
    <citation type="journal article" date="2012" name="Proc. Natl. Acad. Sci. U.S.A.">
        <title>N-terminal acetylome analyses and functional insights of the N-terminal acetyltransferase NatB.</title>
        <authorList>
            <person name="Van Damme P."/>
            <person name="Lasa M."/>
            <person name="Polevoda B."/>
            <person name="Gazquez C."/>
            <person name="Elosegui-Artola A."/>
            <person name="Kim D.S."/>
            <person name="De Juan-Pardo E."/>
            <person name="Demeyer K."/>
            <person name="Hole K."/>
            <person name="Larrea E."/>
            <person name="Timmerman E."/>
            <person name="Prieto J."/>
            <person name="Arnesen T."/>
            <person name="Sherman F."/>
            <person name="Gevaert K."/>
            <person name="Aldabe R."/>
        </authorList>
    </citation>
    <scope>IDENTIFICATION BY MASS SPECTROMETRY [LARGE SCALE ANALYSIS]</scope>
</reference>
<gene>
    <name type="primary">SIM2</name>
    <name type="synonym">BHLHE15</name>
</gene>
<sequence length="667" mass="73219">MKEKSKNAAKTRREKENGEFYELAKLLPLPSAITSQLDKASIIRLTTSYLKMRAVFPEGLGDAWGQPSRAGPLDGVAKELGSHLLQTLDGFVFVVASDGKIMYISETASVHLGLSQVELTGNSIYEYIHPSDHDEMTAVLTAHQPLHHHLLQEYEIERSFFLRMKCVLAKRNAGLTCSGYKVIHCSGYLKIRQYMLDMSLYDSCYQIVGLVAVGQSLPPSAITEIKLYSNMFMFRASLDLKLIFLDSRVTEVTGYEPQDLIEKTLYHHVHGCDVFHLRYAHHLLLVKGQVTTKYYRLLSKRGGWVWVQSYATVVHNSRSSRPHCIVSVNYVLTEIEYKELQLSLEQVSTAKSQDSWRTALSTSQETRKLVKPKNTKMKTKLRTNPYPPQQYSSFQMDKLECGQLGNWRASPPASAAAPPELQPHSESSDLLYTPSYSLPFSYHYGHFPLDSHVFSSKKPMLPAKFGQPQGSPCEVARFFLSTLPASGECQWHYANPLVPSSSSPAKNPPEPPANTARHSLVPSYEAPAAAVRRFGEDTAPPSFPSCGHYREEPALGPAKAARQAARDGARLALARAAPECCAPPTPEAPGAPAQLPFVLLNYHRVLARRGPLGGAAPAASGLACAPGGPEAATGALRLRHPSPAATSPPGAPLPHYLGASVIITNGR</sequence>
<proteinExistence type="evidence at protein level"/>
<evidence type="ECO:0000255" key="1">
    <source>
        <dbReference type="PROSITE-ProRule" id="PRU00140"/>
    </source>
</evidence>
<evidence type="ECO:0000255" key="2">
    <source>
        <dbReference type="PROSITE-ProRule" id="PRU00632"/>
    </source>
</evidence>
<evidence type="ECO:0000255" key="3">
    <source>
        <dbReference type="PROSITE-ProRule" id="PRU00981"/>
    </source>
</evidence>
<evidence type="ECO:0000256" key="4">
    <source>
        <dbReference type="SAM" id="MobiDB-lite"/>
    </source>
</evidence>
<evidence type="ECO:0000269" key="5">
    <source>
    </source>
</evidence>
<evidence type="ECO:0000269" key="6">
    <source>
    </source>
</evidence>
<evidence type="ECO:0000303" key="7">
    <source>
    </source>
</evidence>
<evidence type="ECO:0000303" key="8">
    <source>
    </source>
</evidence>
<evidence type="ECO:0000305" key="9"/>
<feature type="chain" id="PRO_0000127441" description="Single-minded homolog 2">
    <location>
        <begin position="1"/>
        <end position="667"/>
    </location>
</feature>
<feature type="domain" description="bHLH" evidence="3">
    <location>
        <begin position="1"/>
        <end position="53"/>
    </location>
</feature>
<feature type="domain" description="PAS 1" evidence="1">
    <location>
        <begin position="77"/>
        <end position="149"/>
    </location>
</feature>
<feature type="domain" description="PAS 2" evidence="1">
    <location>
        <begin position="218"/>
        <end position="288"/>
    </location>
</feature>
<feature type="domain" description="PAC">
    <location>
        <begin position="292"/>
        <end position="335"/>
    </location>
</feature>
<feature type="domain" description="Single-minded C-terminal" evidence="2">
    <location>
        <begin position="336"/>
        <end position="667"/>
    </location>
</feature>
<feature type="region of interest" description="Disordered" evidence="4">
    <location>
        <begin position="356"/>
        <end position="389"/>
    </location>
</feature>
<feature type="region of interest" description="Disordered" evidence="4">
    <location>
        <begin position="409"/>
        <end position="428"/>
    </location>
</feature>
<feature type="region of interest" description="Disordered" evidence="4">
    <location>
        <begin position="500"/>
        <end position="520"/>
    </location>
</feature>
<feature type="short sequence motif" description="Nuclear localization signal" evidence="5">
    <location>
        <begin position="367"/>
        <end position="386"/>
    </location>
</feature>
<feature type="compositionally biased region" description="Basic residues" evidence="4">
    <location>
        <begin position="369"/>
        <end position="381"/>
    </location>
</feature>
<feature type="compositionally biased region" description="Low complexity" evidence="4">
    <location>
        <begin position="409"/>
        <end position="419"/>
    </location>
</feature>
<feature type="splice variant" id="VSP_002148" description="In isoform SIM2S." evidence="7 8">
    <original>APAAAVRRFGEDTAPPSFPSCGHYREEPALGPAKAARQAARDGAR</original>
    <variation>GGSGLLVGKVGGLRTAGSRSSHGGGWQMETEPSRFGQTCPLSASK</variation>
    <location>
        <begin position="526"/>
        <end position="570"/>
    </location>
</feature>
<feature type="splice variant" id="VSP_012767" description="In isoform SIM2S." evidence="7 8">
    <location>
        <begin position="571"/>
        <end position="667"/>
    </location>
</feature>
<feature type="sequence variant" id="VAR_024281" description="In dbSNP:rs2073601." evidence="6">
    <original>L</original>
    <variation>M</variation>
    <location>
        <position position="483"/>
    </location>
</feature>
<feature type="mutagenesis site" description="Reduced nuclear translocation." evidence="5">
    <original>R</original>
    <variation>A</variation>
    <variation>G</variation>
    <location>
        <position position="367"/>
    </location>
</feature>
<feature type="mutagenesis site" description="No effect on nuclear translocation." evidence="5">
    <original>K</original>
    <variation>A</variation>
    <location>
        <position position="368"/>
    </location>
</feature>
<feature type="mutagenesis site" description="No effect on nuclear translocation." evidence="5">
    <original>L</original>
    <variation>A</variation>
    <location>
        <position position="369"/>
    </location>
</feature>
<feature type="mutagenesis site" description="No effect on nuclear translocation." evidence="5">
    <original>V</original>
    <variation>A</variation>
    <location>
        <position position="370"/>
    </location>
</feature>
<feature type="mutagenesis site" description="No effect on nuclear translocation." evidence="5">
    <original>K</original>
    <variation>A</variation>
    <location>
        <position position="371"/>
    </location>
</feature>
<feature type="mutagenesis site" description="No effect on nuclear translocation." evidence="5">
    <original>P</original>
    <variation>A</variation>
    <location>
        <position position="372"/>
    </location>
</feature>
<feature type="mutagenesis site" description="Reduced nuclear translocation." evidence="5">
    <original>K</original>
    <variation>A</variation>
    <variation>G</variation>
    <location>
        <position position="373"/>
    </location>
</feature>
<feature type="mutagenesis site" description="No effect on nuclear translocation." evidence="5">
    <original>T</original>
    <variation>A</variation>
    <location>
        <position position="375"/>
    </location>
</feature>
<feature type="mutagenesis site" description="No effect on nuclear translocation." evidence="5">
    <original>K</original>
    <variation>A</variation>
    <location>
        <position position="376"/>
    </location>
</feature>
<feature type="mutagenesis site" description="No effect on nuclear translocation." evidence="5">
    <original>M</original>
    <variation>A</variation>
    <location>
        <position position="377"/>
    </location>
</feature>
<feature type="mutagenesis site" description="No effect on nuclear translocation." evidence="5">
    <original>K</original>
    <variation>G</variation>
    <location>
        <position position="378"/>
    </location>
</feature>
<feature type="mutagenesis site" description="No effect on nuclear translocation." evidence="5">
    <original>T</original>
    <variation>A</variation>
    <location>
        <position position="379"/>
    </location>
</feature>
<feature type="mutagenesis site" description="No effect on nuclear translocation." evidence="5">
    <original>K</original>
    <variation>A</variation>
    <location>
        <position position="380"/>
    </location>
</feature>
<feature type="mutagenesis site" description="No effect on nuclear translocation." evidence="5">
    <original>L</original>
    <variation>A</variation>
    <location>
        <position position="381"/>
    </location>
</feature>
<feature type="mutagenesis site" description="No effect on nuclear translocation." evidence="5">
    <original>R</original>
    <variation>A</variation>
    <location>
        <position position="382"/>
    </location>
</feature>
<feature type="mutagenesis site" description="No effect on nuclear translocation." evidence="5">
    <original>T</original>
    <variation>A</variation>
    <location>
        <position position="383"/>
    </location>
</feature>
<feature type="mutagenesis site" description="Reduced nuclear translocation." evidence="5">
    <original>P</original>
    <variation>A</variation>
    <location>
        <position position="385"/>
    </location>
</feature>
<feature type="mutagenesis site" description="Reduced nuclear translocation." evidence="5">
    <original>Y</original>
    <variation>A</variation>
    <location>
        <position position="386"/>
    </location>
</feature>
<feature type="sequence conflict" description="In Ref. 7; BAA07909." evidence="9" ref="7">
    <original>IH</original>
    <variation>RI</variation>
    <location>
        <begin position="183"/>
        <end position="184"/>
    </location>
</feature>
<feature type="sequence conflict" description="In Ref. 8; AAB62397/CAA05055." evidence="9" ref="8">
    <original>V</original>
    <variation>F</variation>
    <location>
        <position position="453"/>
    </location>
</feature>
<feature type="sequence conflict" description="In Ref. 8; AAB62397." evidence="9" ref="8">
    <original>A</original>
    <variation>G</variation>
    <location>
        <position position="526"/>
    </location>
</feature>
<accession>Q14190</accession>
<accession>O60766</accession>
<accession>Q15470</accession>
<accession>Q15471</accession>
<accession>Q15472</accession>
<accession>Q15473</accession>
<accession>Q16532</accession>
<accession>Q2TBD8</accession>
<comment type="function">
    <text>Transcription factor that may be a master gene of CNS development in cooperation with Arnt. It may have pleiotropic effects in the tissues expressed during development.</text>
</comment>
<comment type="subunit">
    <text>Efficient DNA binding requires dimerization with another bHLH protein. Heterodimer of SIM2 and ARNT.</text>
</comment>
<comment type="interaction">
    <interactant intactId="EBI-6427100">
        <id>Q14190</id>
    </interactant>
    <interactant intactId="EBI-1049387">
        <id>Q15185</id>
        <label>PTGES3</label>
    </interactant>
    <organismsDiffer>false</organismsDiffer>
    <experiments>2</experiments>
</comment>
<comment type="interaction">
    <interactant intactId="EBI-21623725">
        <id>Q14190-2</id>
    </interactant>
    <interactant intactId="EBI-21251460">
        <id>O60260-5</id>
        <label>PRKN</label>
    </interactant>
    <organismsDiffer>false</organismsDiffer>
    <experiments>3</experiments>
</comment>
<comment type="subcellular location">
    <subcellularLocation>
        <location evidence="2 3 5">Nucleus</location>
    </subcellularLocation>
</comment>
<comment type="alternative products">
    <event type="alternative splicing"/>
    <isoform>
        <id>Q14190-1</id>
        <name>SIM2</name>
        <sequence type="displayed"/>
    </isoform>
    <isoform>
        <id>Q14190-2</id>
        <name>SIM2S</name>
        <sequence type="described" ref="VSP_002148 VSP_012767"/>
    </isoform>
</comment>
<organism>
    <name type="scientific">Homo sapiens</name>
    <name type="common">Human</name>
    <dbReference type="NCBI Taxonomy" id="9606"/>
    <lineage>
        <taxon>Eukaryota</taxon>
        <taxon>Metazoa</taxon>
        <taxon>Chordata</taxon>
        <taxon>Craniata</taxon>
        <taxon>Vertebrata</taxon>
        <taxon>Euteleostomi</taxon>
        <taxon>Mammalia</taxon>
        <taxon>Eutheria</taxon>
        <taxon>Euarchontoglires</taxon>
        <taxon>Primates</taxon>
        <taxon>Haplorrhini</taxon>
        <taxon>Catarrhini</taxon>
        <taxon>Hominidae</taxon>
        <taxon>Homo</taxon>
    </lineage>
</organism>